<feature type="chain" id="PRO_1000193379" description="DNA repair protein RecO">
    <location>
        <begin position="1"/>
        <end position="233"/>
    </location>
</feature>
<name>RECO_FRAP2</name>
<reference key="1">
    <citation type="submission" date="2007-12" db="EMBL/GenBank/DDBJ databases">
        <title>Complete sequence of chromosome of Francisella philomiragia subsp. philomiragia ATCC 25017.</title>
        <authorList>
            <consortium name="US DOE Joint Genome Institute"/>
            <person name="Copeland A."/>
            <person name="Lucas S."/>
            <person name="Lapidus A."/>
            <person name="Barry K."/>
            <person name="Detter J.C."/>
            <person name="Glavina del Rio T."/>
            <person name="Hammon N."/>
            <person name="Israni S."/>
            <person name="Dalin E."/>
            <person name="Tice H."/>
            <person name="Pitluck S."/>
            <person name="Chain P."/>
            <person name="Malfatti S."/>
            <person name="Shin M."/>
            <person name="Vergez L."/>
            <person name="Schmutz J."/>
            <person name="Larimer F."/>
            <person name="Land M."/>
            <person name="Hauser L."/>
            <person name="Richardson P."/>
        </authorList>
    </citation>
    <scope>NUCLEOTIDE SEQUENCE [LARGE SCALE GENOMIC DNA]</scope>
    <source>
        <strain>ATCC 25017 / CCUG 19701 / FSC 153 / O#319-036</strain>
    </source>
</reference>
<keyword id="KW-0227">DNA damage</keyword>
<keyword id="KW-0233">DNA recombination</keyword>
<keyword id="KW-0234">DNA repair</keyword>
<gene>
    <name evidence="1" type="primary">recO</name>
    <name type="ordered locus">Fphi_1437</name>
</gene>
<comment type="function">
    <text evidence="1">Involved in DNA repair and RecF pathway recombination.</text>
</comment>
<comment type="similarity">
    <text evidence="1">Belongs to the RecO family.</text>
</comment>
<protein>
    <recommendedName>
        <fullName evidence="1">DNA repair protein RecO</fullName>
    </recommendedName>
    <alternativeName>
        <fullName evidence="1">Recombination protein O</fullName>
    </alternativeName>
</protein>
<evidence type="ECO:0000255" key="1">
    <source>
        <dbReference type="HAMAP-Rule" id="MF_00201"/>
    </source>
</evidence>
<sequence length="233" mass="27106">MQQLYDFYILHQCKYKENSLLVSIFTREFGKISGLIRVNKKTINLYQPLVKLRGQISLAKKSDGLSKIYNVEFVESFYQNTYINLLSLQYMNELIYLLLSYSHEEEFLFEKYGFILKNINEINYKYLLRMFELELLDSLGQGVYVDCDIDGMLIDESLSYSILATGFKKNLSTIPNSIAGKNLLKINQSVSLWTDEDLKAISKVTRAYIDYALAGKQLRSRKLLIDYLNLGKK</sequence>
<accession>B0TYI6</accession>
<dbReference type="EMBL" id="CP000937">
    <property type="protein sequence ID" value="ABZ87662.1"/>
    <property type="molecule type" value="Genomic_DNA"/>
</dbReference>
<dbReference type="SMR" id="B0TYI6"/>
<dbReference type="KEGG" id="fph:Fphi_1437"/>
<dbReference type="eggNOG" id="COG1381">
    <property type="taxonomic scope" value="Bacteria"/>
</dbReference>
<dbReference type="HOGENOM" id="CLU_066645_1_0_6"/>
<dbReference type="GO" id="GO:0043590">
    <property type="term" value="C:bacterial nucleoid"/>
    <property type="evidence" value="ECO:0007669"/>
    <property type="project" value="TreeGrafter"/>
</dbReference>
<dbReference type="GO" id="GO:0006310">
    <property type="term" value="P:DNA recombination"/>
    <property type="evidence" value="ECO:0007669"/>
    <property type="project" value="UniProtKB-UniRule"/>
</dbReference>
<dbReference type="GO" id="GO:0006302">
    <property type="term" value="P:double-strand break repair"/>
    <property type="evidence" value="ECO:0007669"/>
    <property type="project" value="TreeGrafter"/>
</dbReference>
<dbReference type="Gene3D" id="2.40.50.140">
    <property type="entry name" value="Nucleic acid-binding proteins"/>
    <property type="match status" value="1"/>
</dbReference>
<dbReference type="Gene3D" id="1.20.1440.120">
    <property type="entry name" value="Recombination protein O, C-terminal domain"/>
    <property type="match status" value="1"/>
</dbReference>
<dbReference type="HAMAP" id="MF_00201">
    <property type="entry name" value="RecO"/>
    <property type="match status" value="1"/>
</dbReference>
<dbReference type="InterPro" id="IPR022572">
    <property type="entry name" value="DNA_rep/recomb_RecO_N"/>
</dbReference>
<dbReference type="InterPro" id="IPR012340">
    <property type="entry name" value="NA-bd_OB-fold"/>
</dbReference>
<dbReference type="InterPro" id="IPR003717">
    <property type="entry name" value="RecO"/>
</dbReference>
<dbReference type="InterPro" id="IPR042242">
    <property type="entry name" value="RecO_C"/>
</dbReference>
<dbReference type="NCBIfam" id="TIGR00613">
    <property type="entry name" value="reco"/>
    <property type="match status" value="1"/>
</dbReference>
<dbReference type="PANTHER" id="PTHR33991">
    <property type="entry name" value="DNA REPAIR PROTEIN RECO"/>
    <property type="match status" value="1"/>
</dbReference>
<dbReference type="PANTHER" id="PTHR33991:SF1">
    <property type="entry name" value="DNA REPAIR PROTEIN RECO"/>
    <property type="match status" value="1"/>
</dbReference>
<dbReference type="Pfam" id="PF02565">
    <property type="entry name" value="RecO_C"/>
    <property type="match status" value="1"/>
</dbReference>
<dbReference type="Pfam" id="PF11967">
    <property type="entry name" value="RecO_N"/>
    <property type="match status" value="1"/>
</dbReference>
<dbReference type="SUPFAM" id="SSF50249">
    <property type="entry name" value="Nucleic acid-binding proteins"/>
    <property type="match status" value="1"/>
</dbReference>
<proteinExistence type="inferred from homology"/>
<organism>
    <name type="scientific">Francisella philomiragia subsp. philomiragia (strain ATCC 25017 / CCUG 19701 / FSC 153 / O#319-036)</name>
    <dbReference type="NCBI Taxonomy" id="484022"/>
    <lineage>
        <taxon>Bacteria</taxon>
        <taxon>Pseudomonadati</taxon>
        <taxon>Pseudomonadota</taxon>
        <taxon>Gammaproteobacteria</taxon>
        <taxon>Thiotrichales</taxon>
        <taxon>Francisellaceae</taxon>
        <taxon>Francisella</taxon>
    </lineage>
</organism>